<feature type="chain" id="PRO_1000021616" description="Nicotinate-nucleotide--dimethylbenzimidazole phosphoribosyltransferase">
    <location>
        <begin position="1"/>
        <end position="351"/>
    </location>
</feature>
<feature type="active site" description="Proton acceptor" evidence="1">
    <location>
        <position position="317"/>
    </location>
</feature>
<organism>
    <name type="scientific">Ectopseudomonas mendocina (strain ymp)</name>
    <name type="common">Pseudomonas mendocina</name>
    <dbReference type="NCBI Taxonomy" id="399739"/>
    <lineage>
        <taxon>Bacteria</taxon>
        <taxon>Pseudomonadati</taxon>
        <taxon>Pseudomonadota</taxon>
        <taxon>Gammaproteobacteria</taxon>
        <taxon>Pseudomonadales</taxon>
        <taxon>Pseudomonadaceae</taxon>
        <taxon>Ectopseudomonas</taxon>
    </lineage>
</organism>
<proteinExistence type="inferred from homology"/>
<dbReference type="EC" id="2.4.2.21" evidence="1"/>
<dbReference type="EMBL" id="CP000680">
    <property type="protein sequence ID" value="ABP84521.1"/>
    <property type="molecule type" value="Genomic_DNA"/>
</dbReference>
<dbReference type="SMR" id="A4XT55"/>
<dbReference type="STRING" id="399739.Pmen_1757"/>
<dbReference type="KEGG" id="pmy:Pmen_1757"/>
<dbReference type="PATRIC" id="fig|399739.8.peg.1781"/>
<dbReference type="eggNOG" id="COG2038">
    <property type="taxonomic scope" value="Bacteria"/>
</dbReference>
<dbReference type="HOGENOM" id="CLU_002982_0_0_6"/>
<dbReference type="OrthoDB" id="9781491at2"/>
<dbReference type="UniPathway" id="UPA00061">
    <property type="reaction ID" value="UER00516"/>
</dbReference>
<dbReference type="GO" id="GO:0008939">
    <property type="term" value="F:nicotinate-nucleotide-dimethylbenzimidazole phosphoribosyltransferase activity"/>
    <property type="evidence" value="ECO:0007669"/>
    <property type="project" value="UniProtKB-UniRule"/>
</dbReference>
<dbReference type="GO" id="GO:0009236">
    <property type="term" value="P:cobalamin biosynthetic process"/>
    <property type="evidence" value="ECO:0007669"/>
    <property type="project" value="UniProtKB-KW"/>
</dbReference>
<dbReference type="CDD" id="cd02439">
    <property type="entry name" value="DMB-PRT_CobT"/>
    <property type="match status" value="1"/>
</dbReference>
<dbReference type="FunFam" id="3.40.50.10210:FF:000001">
    <property type="entry name" value="Nicotinate-nucleotide--dimethylbenzimidazole phosphoribosyltransferase"/>
    <property type="match status" value="1"/>
</dbReference>
<dbReference type="Gene3D" id="1.10.1610.10">
    <property type="match status" value="1"/>
</dbReference>
<dbReference type="Gene3D" id="3.40.50.10210">
    <property type="match status" value="1"/>
</dbReference>
<dbReference type="HAMAP" id="MF_00230">
    <property type="entry name" value="CobT"/>
    <property type="match status" value="1"/>
</dbReference>
<dbReference type="InterPro" id="IPR003200">
    <property type="entry name" value="Nict_dMeBzImd_PRibTrfase"/>
</dbReference>
<dbReference type="InterPro" id="IPR017846">
    <property type="entry name" value="Nict_dMeBzImd_PRibTrfase_bact"/>
</dbReference>
<dbReference type="InterPro" id="IPR023195">
    <property type="entry name" value="Nict_dMeBzImd_PRibTrfase_N"/>
</dbReference>
<dbReference type="InterPro" id="IPR036087">
    <property type="entry name" value="Nict_dMeBzImd_PRibTrfase_sf"/>
</dbReference>
<dbReference type="NCBIfam" id="TIGR03160">
    <property type="entry name" value="cobT_DBIPRT"/>
    <property type="match status" value="1"/>
</dbReference>
<dbReference type="NCBIfam" id="NF000996">
    <property type="entry name" value="PRK00105.1"/>
    <property type="match status" value="1"/>
</dbReference>
<dbReference type="PANTHER" id="PTHR43463">
    <property type="entry name" value="NICOTINATE-NUCLEOTIDE--DIMETHYLBENZIMIDAZOLE PHOSPHORIBOSYLTRANSFERASE"/>
    <property type="match status" value="1"/>
</dbReference>
<dbReference type="PANTHER" id="PTHR43463:SF1">
    <property type="entry name" value="NICOTINATE-NUCLEOTIDE--DIMETHYLBENZIMIDAZOLE PHOSPHORIBOSYLTRANSFERASE"/>
    <property type="match status" value="1"/>
</dbReference>
<dbReference type="Pfam" id="PF02277">
    <property type="entry name" value="DBI_PRT"/>
    <property type="match status" value="1"/>
</dbReference>
<dbReference type="SUPFAM" id="SSF52733">
    <property type="entry name" value="Nicotinate mononucleotide:5,6-dimethylbenzimidazole phosphoribosyltransferase (CobT)"/>
    <property type="match status" value="1"/>
</dbReference>
<sequence>MKLQWWQGPCQPLDHVARTKAESRQQQLTKPAGSLGRLEKLAIHLAALQGRERPSLDKLWIAIFAGDHGVVAEGVSAYPQAVTGQMLANFVSGGAAISVLARELDAALEVIDLGTAEPLPPLPGVRHLYVGAGTQNLAREPAMTLSQLLICLEAGRDSLLRARAVGCDLFVGGEMGIGNTTAAAALACWLLGCPASELAGPGTGLDGAGVAHKARVIDAALALHHAQIDGPLQALVHLGGFEIAALTGAYLAAAQQGIAVLVDGFICSVAALLAVRLNPGCRDWLLFAHHGAEPGHVRVLQALGAEPLLELGLRLGEGSGAALAVPLLRLACSLHGQMATFAEAAVAQRPQ</sequence>
<name>COBT_ECTM1</name>
<reference key="1">
    <citation type="submission" date="2007-04" db="EMBL/GenBank/DDBJ databases">
        <title>Complete sequence of Pseudomonas mendocina ymp.</title>
        <authorList>
            <consortium name="US DOE Joint Genome Institute"/>
            <person name="Copeland A."/>
            <person name="Lucas S."/>
            <person name="Lapidus A."/>
            <person name="Barry K."/>
            <person name="Glavina del Rio T."/>
            <person name="Dalin E."/>
            <person name="Tice H."/>
            <person name="Pitluck S."/>
            <person name="Kiss H."/>
            <person name="Brettin T."/>
            <person name="Detter J.C."/>
            <person name="Bruce D."/>
            <person name="Han C."/>
            <person name="Schmutz J."/>
            <person name="Larimer F."/>
            <person name="Land M."/>
            <person name="Hauser L."/>
            <person name="Kyrpides N."/>
            <person name="Mikhailova N."/>
            <person name="Hersman L."/>
            <person name="Dubois J."/>
            <person name="Maurice P."/>
            <person name="Richardson P."/>
        </authorList>
    </citation>
    <scope>NUCLEOTIDE SEQUENCE [LARGE SCALE GENOMIC DNA]</scope>
    <source>
        <strain>ymp</strain>
    </source>
</reference>
<gene>
    <name evidence="1" type="primary">cobT</name>
    <name type="ordered locus">Pmen_1757</name>
</gene>
<keyword id="KW-0169">Cobalamin biosynthesis</keyword>
<keyword id="KW-0328">Glycosyltransferase</keyword>
<keyword id="KW-0808">Transferase</keyword>
<protein>
    <recommendedName>
        <fullName evidence="1">Nicotinate-nucleotide--dimethylbenzimidazole phosphoribosyltransferase</fullName>
        <shortName evidence="1">NN:DBI PRT</shortName>
        <ecNumber evidence="1">2.4.2.21</ecNumber>
    </recommendedName>
    <alternativeName>
        <fullName evidence="1">N(1)-alpha-phosphoribosyltransferase</fullName>
    </alternativeName>
</protein>
<evidence type="ECO:0000255" key="1">
    <source>
        <dbReference type="HAMAP-Rule" id="MF_00230"/>
    </source>
</evidence>
<comment type="function">
    <text evidence="1">Catalyzes the synthesis of alpha-ribazole-5'-phosphate from nicotinate mononucleotide (NAMN) and 5,6-dimethylbenzimidazole (DMB).</text>
</comment>
<comment type="catalytic activity">
    <reaction evidence="1">
        <text>5,6-dimethylbenzimidazole + nicotinate beta-D-ribonucleotide = alpha-ribazole 5'-phosphate + nicotinate + H(+)</text>
        <dbReference type="Rhea" id="RHEA:11196"/>
        <dbReference type="ChEBI" id="CHEBI:15378"/>
        <dbReference type="ChEBI" id="CHEBI:15890"/>
        <dbReference type="ChEBI" id="CHEBI:32544"/>
        <dbReference type="ChEBI" id="CHEBI:57502"/>
        <dbReference type="ChEBI" id="CHEBI:57918"/>
        <dbReference type="EC" id="2.4.2.21"/>
    </reaction>
</comment>
<comment type="pathway">
    <text evidence="1">Nucleoside biosynthesis; alpha-ribazole biosynthesis; alpha-ribazole from 5,6-dimethylbenzimidazole: step 1/2.</text>
</comment>
<comment type="similarity">
    <text evidence="1">Belongs to the CobT family.</text>
</comment>
<accession>A4XT55</accession>